<evidence type="ECO:0000250" key="1">
    <source>
        <dbReference type="UniProtKB" id="Q16650"/>
    </source>
</evidence>
<evidence type="ECO:0000255" key="2">
    <source>
        <dbReference type="PROSITE-ProRule" id="PRU00201"/>
    </source>
</evidence>
<evidence type="ECO:0000255" key="3">
    <source>
        <dbReference type="PROSITE-ProRule" id="PRU00251"/>
    </source>
</evidence>
<evidence type="ECO:0000256" key="4">
    <source>
        <dbReference type="SAM" id="MobiDB-lite"/>
    </source>
</evidence>
<evidence type="ECO:0000269" key="5">
    <source>
    </source>
</evidence>
<evidence type="ECO:0000269" key="6">
    <source>
    </source>
</evidence>
<evidence type="ECO:0000269" key="7">
    <source>
    </source>
</evidence>
<evidence type="ECO:0000269" key="8">
    <source>
    </source>
</evidence>
<evidence type="ECO:0000305" key="9"/>
<sequence length="292" mass="33045">MSKVKVSIEGSQETLWKIFHAEVNEMIVTKNGRKLFPKLEYIVEGLDENKLYAIMLQLQPVGESRFKFSGGKWQETGKAEKQVDAKKMWHADGVRKGSDWMWSSICFDRVKISNYSESNNASMIYLNSMHKYIPVLTIYESPSESPFCVPQSSNQIVATAKFPHTEFIAVTAYQNQKITDLKIKHNSFAKGFRDGNLSRKRRSPSYSDGSNSQSPSPKSRSPPEVAPLQSMPPINPFLFYFPHMLSENLPVQFPFAFPFLSPLPSTPSSSSSELSIVKEEDQEVEEDIDIVG</sequence>
<name>TBX9_CAEEL</name>
<reference key="1">
    <citation type="journal article" date="2004" name="Genes Cells">
        <title>Caenorhabditis elegans T-box genes tbx-9 and tbx-8 are required for formation of hypodermis and body-wall muscle in embryogenesis.</title>
        <authorList>
            <person name="Andachi Y."/>
        </authorList>
    </citation>
    <scope>NUCLEOTIDE SEQUENCE [MRNA]</scope>
    <scope>FUNCTION</scope>
    <scope>SUBCELLULAR LOCATION</scope>
    <scope>DEVELOPMENTAL STAGE</scope>
    <source>
        <strain>Bristol N2</strain>
    </source>
</reference>
<reference key="2">
    <citation type="journal article" date="1998" name="Science">
        <title>Genome sequence of the nematode C. elegans: a platform for investigating biology.</title>
        <authorList>
            <consortium name="The C. elegans sequencing consortium"/>
        </authorList>
    </citation>
    <scope>NUCLEOTIDE SEQUENCE [LARGE SCALE GENOMIC DNA]</scope>
    <source>
        <strain>Bristol N2</strain>
    </source>
</reference>
<reference key="3">
    <citation type="journal article" date="2004" name="Development">
        <title>A regulatory network of T-box genes and the even-skipped homologue vab-7 controls patterning and morphogenesis in C. elegans.</title>
        <authorList>
            <person name="Pocock R."/>
            <person name="Ahringer J."/>
            <person name="Mitsch M."/>
            <person name="Maxwell S."/>
            <person name="Woollard A."/>
        </authorList>
    </citation>
    <scope>FUNCTION</scope>
    <scope>SUBCELLULAR LOCATION</scope>
    <scope>DEVELOPMENTAL STAGE</scope>
    <scope>DISRUPTION PHENOTYPE</scope>
</reference>
<reference key="4">
    <citation type="journal article" date="2005" name="Genome Biol.">
        <title>Synthetic lethal analysis of Caenorhabditis elegans posterior embryonic patterning genes identifies conserved genetic interactions.</title>
        <authorList>
            <person name="Baugh L.R."/>
            <person name="Wen J.C."/>
            <person name="Hill A.A."/>
            <person name="Slonim D.K."/>
            <person name="Brown E.L."/>
            <person name="Hunter C.P."/>
        </authorList>
    </citation>
    <scope>DISRUPTION PHENOTYPE</scope>
</reference>
<reference evidence="9" key="5">
    <citation type="journal article" date="2014" name="BMC Dev. Biol.">
        <title>Multiple transcription factors directly regulate Hox gene lin-39 expression in ventral hypodermal cells of the C. elegans embryo and larva, including the hypodermal fate regulators LIN-26 and ELT-6.</title>
        <authorList>
            <person name="Liu W.J."/>
            <person name="Reece-Hoyes J.S."/>
            <person name="Walhout A.J."/>
            <person name="Eisenmann D.M."/>
        </authorList>
    </citation>
    <scope>FUNCTION</scope>
    <scope>DISRUPTION PHENOTYPE</scope>
</reference>
<gene>
    <name type="primary">tbx-9</name>
    <name type="ORF">T07C4.6</name>
</gene>
<organism>
    <name type="scientific">Caenorhabditis elegans</name>
    <dbReference type="NCBI Taxonomy" id="6239"/>
    <lineage>
        <taxon>Eukaryota</taxon>
        <taxon>Metazoa</taxon>
        <taxon>Ecdysozoa</taxon>
        <taxon>Nematoda</taxon>
        <taxon>Chromadorea</taxon>
        <taxon>Rhabditida</taxon>
        <taxon>Rhabditina</taxon>
        <taxon>Rhabditomorpha</taxon>
        <taxon>Rhabditoidea</taxon>
        <taxon>Rhabditidae</taxon>
        <taxon>Peloderinae</taxon>
        <taxon>Caenorhabditis</taxon>
    </lineage>
</organism>
<protein>
    <recommendedName>
        <fullName>T-box transcription factor tbx-9</fullName>
    </recommendedName>
</protein>
<keyword id="KW-0217">Developmental protein</keyword>
<keyword id="KW-0238">DNA-binding</keyword>
<keyword id="KW-0539">Nucleus</keyword>
<keyword id="KW-1185">Reference proteome</keyword>
<keyword id="KW-0804">Transcription</keyword>
<keyword id="KW-0805">Transcription regulation</keyword>
<comment type="function">
    <text evidence="1 5 6 8">Transcription factor (By similarity). Involved in the control of early morphogenesis of the intestine, hypodermis and body-wall muscle (PubMed:15066124, PubMed:15102704). Involved in regulating expression of vab-7 (PubMed:15102704). Appears to have partially redundant function to tbx-8 (PubMed:15066124). Positively modulates expression of homeobox protein lin-39, perhaps by binding to regulatory regions of the lin-39 gene, acting in the vulval lineage.</text>
</comment>
<comment type="subcellular location">
    <subcellularLocation>
        <location evidence="3 5 6">Nucleus</location>
    </subcellularLocation>
</comment>
<comment type="developmental stage">
    <text evidence="5 6">Expressed during morphogenesis in the hypodermis, body-wall muscle, intestine and dorsal, lateral and ventral hypodermal cells (PubMed:15066124, PubMed:15102704). First detected in the E cell at the 8 cell stage and its daughter Ea and Ep cells until the 24 cell stage (PubMed:15066124, PubMed:15102704). At the 24 cell stage detected in 5 cells including AB descendant cells and also the Ca and Cp cells (PubMed:15066124). At the 200 cell stage, detected in two pairs of MS descendant cells (PubMed:15066124). Thereafter detected in a subset of cells at each stage up to approximately the 400 cell stage, becoming undetectable just before morphogenesis (PubMed:15066124). During morphogenesis detected in the hypodermis, body-wall muscle, intestine and dorsal, lateral and ventral hypodermal cells up until early L1 larval stage (PubMed:15066124, PubMed:15102704).</text>
</comment>
<comment type="disruption phenotype">
    <text evidence="6 7 8">RNAi-mediated knockdown causes about 5% embryonic lethality with 1-10% of hatching larvae displaying posterior morphological defects (PubMed:15102704, PubMed:15892873). Defective intercalation of dorsal hypodermis (PubMed:15102704). Simultaneous RNAi-mediated knockdown of tbx-8 causes at least 48% of embryos to fail to hatch and those that do display severe morphological defects and die as larvae (PubMed:15102704, PubMed:15892873). Simultaneous RNAi-mediated knockdown of tbx-8 abolishes muscle expression of vab-7 (PubMed:15102704). RNAi-mediated knockdown at the larval L1 stage causes a decrease in expression of lin-39 at the larval L3 stage (PubMed:24885717). Knockdown in L1 stage larvae, in a lin-39 mutant background, causes abnormal fusion of vulval precursor cells at larval stage L2 (PubMed:24885717).</text>
</comment>
<accession>Q22289</accession>
<accession>Q86M50</accession>
<dbReference type="EMBL" id="AB019521">
    <property type="protein sequence ID" value="BAC66463.1"/>
    <property type="molecule type" value="mRNA"/>
</dbReference>
<dbReference type="EMBL" id="Z29443">
    <property type="protein sequence ID" value="CAA82575.2"/>
    <property type="molecule type" value="Genomic_DNA"/>
</dbReference>
<dbReference type="PIR" id="S41019">
    <property type="entry name" value="S41019"/>
</dbReference>
<dbReference type="RefSeq" id="NP_499286.2">
    <property type="nucleotide sequence ID" value="NM_066885.8"/>
</dbReference>
<dbReference type="SMR" id="Q22289"/>
<dbReference type="BioGRID" id="41642">
    <property type="interactions" value="122"/>
</dbReference>
<dbReference type="FunCoup" id="Q22289">
    <property type="interactions" value="10"/>
</dbReference>
<dbReference type="IntAct" id="Q22289">
    <property type="interactions" value="118"/>
</dbReference>
<dbReference type="STRING" id="6239.T07C4.6.1"/>
<dbReference type="MoonDB" id="Q22289">
    <property type="type" value="Predicted"/>
</dbReference>
<dbReference type="PaxDb" id="6239-T07C4.6"/>
<dbReference type="EnsemblMetazoa" id="T07C4.6.1">
    <property type="protein sequence ID" value="T07C4.6.1"/>
    <property type="gene ID" value="WBGene00006546"/>
</dbReference>
<dbReference type="GeneID" id="176449"/>
<dbReference type="KEGG" id="cel:CELE_T07C4.6"/>
<dbReference type="UCSC" id="T07C4.6">
    <property type="organism name" value="c. elegans"/>
</dbReference>
<dbReference type="AGR" id="WB:WBGene00006546"/>
<dbReference type="CTD" id="176449"/>
<dbReference type="WormBase" id="T07C4.6">
    <property type="protein sequence ID" value="CE36892"/>
    <property type="gene ID" value="WBGene00006546"/>
    <property type="gene designation" value="tbx-9"/>
</dbReference>
<dbReference type="eggNOG" id="KOG3585">
    <property type="taxonomic scope" value="Eukaryota"/>
</dbReference>
<dbReference type="GeneTree" id="ENSGT00970000196046"/>
<dbReference type="HOGENOM" id="CLU_032588_0_0_1"/>
<dbReference type="InParanoid" id="Q22289"/>
<dbReference type="OMA" id="GRNFFPK"/>
<dbReference type="OrthoDB" id="6119313at2759"/>
<dbReference type="PhylomeDB" id="Q22289"/>
<dbReference type="SignaLink" id="Q22289"/>
<dbReference type="PRO" id="PR:Q22289"/>
<dbReference type="Proteomes" id="UP000001940">
    <property type="component" value="Chromosome III"/>
</dbReference>
<dbReference type="Bgee" id="WBGene00006546">
    <property type="expression patterns" value="Expressed in embryo and 18 other cell types or tissues"/>
</dbReference>
<dbReference type="GO" id="GO:0000785">
    <property type="term" value="C:chromatin"/>
    <property type="evidence" value="ECO:0000318"/>
    <property type="project" value="GO_Central"/>
</dbReference>
<dbReference type="GO" id="GO:0005634">
    <property type="term" value="C:nucleus"/>
    <property type="evidence" value="ECO:0000314"/>
    <property type="project" value="UniProtKB"/>
</dbReference>
<dbReference type="GO" id="GO:0005667">
    <property type="term" value="C:transcription regulator complex"/>
    <property type="evidence" value="ECO:0000250"/>
    <property type="project" value="WormBase"/>
</dbReference>
<dbReference type="GO" id="GO:0003677">
    <property type="term" value="F:DNA binding"/>
    <property type="evidence" value="ECO:0000303"/>
    <property type="project" value="UniProtKB"/>
</dbReference>
<dbReference type="GO" id="GO:0003700">
    <property type="term" value="F:DNA-binding transcription factor activity"/>
    <property type="evidence" value="ECO:0000303"/>
    <property type="project" value="UniProtKB"/>
</dbReference>
<dbReference type="GO" id="GO:0000981">
    <property type="term" value="F:DNA-binding transcription factor activity, RNA polymerase II-specific"/>
    <property type="evidence" value="ECO:0000250"/>
    <property type="project" value="WormBase"/>
</dbReference>
<dbReference type="GO" id="GO:0000978">
    <property type="term" value="F:RNA polymerase II cis-regulatory region sequence-specific DNA binding"/>
    <property type="evidence" value="ECO:0000318"/>
    <property type="project" value="GO_Central"/>
</dbReference>
<dbReference type="GO" id="GO:0000977">
    <property type="term" value="F:RNA polymerase II transcription regulatory region sequence-specific DNA binding"/>
    <property type="evidence" value="ECO:0000314"/>
    <property type="project" value="WormBase"/>
</dbReference>
<dbReference type="GO" id="GO:0001708">
    <property type="term" value="P:cell fate specification"/>
    <property type="evidence" value="ECO:0000318"/>
    <property type="project" value="GO_Central"/>
</dbReference>
<dbReference type="GO" id="GO:0010172">
    <property type="term" value="P:embryonic body morphogenesis"/>
    <property type="evidence" value="ECO:0000315"/>
    <property type="project" value="UniProtKB"/>
</dbReference>
<dbReference type="GO" id="GO:0045893">
    <property type="term" value="P:positive regulation of DNA-templated transcription"/>
    <property type="evidence" value="ECO:0007669"/>
    <property type="project" value="InterPro"/>
</dbReference>
<dbReference type="GO" id="GO:0006355">
    <property type="term" value="P:regulation of DNA-templated transcription"/>
    <property type="evidence" value="ECO:0000303"/>
    <property type="project" value="UniProtKB"/>
</dbReference>
<dbReference type="GO" id="GO:0006357">
    <property type="term" value="P:regulation of transcription by RNA polymerase II"/>
    <property type="evidence" value="ECO:0000250"/>
    <property type="project" value="WormBase"/>
</dbReference>
<dbReference type="CDD" id="cd00182">
    <property type="entry name" value="T-box"/>
    <property type="match status" value="1"/>
</dbReference>
<dbReference type="FunFam" id="2.60.40.820:FF:000013">
    <property type="entry name" value="T-box transcription factor tbx-9"/>
    <property type="match status" value="1"/>
</dbReference>
<dbReference type="Gene3D" id="2.60.40.820">
    <property type="entry name" value="Transcription factor, T-box"/>
    <property type="match status" value="1"/>
</dbReference>
<dbReference type="InterPro" id="IPR008967">
    <property type="entry name" value="p53-like_TF_DNA-bd_sf"/>
</dbReference>
<dbReference type="InterPro" id="IPR046360">
    <property type="entry name" value="T-box_DNA-bd"/>
</dbReference>
<dbReference type="InterPro" id="IPR036960">
    <property type="entry name" value="T-box_sf"/>
</dbReference>
<dbReference type="InterPro" id="IPR001699">
    <property type="entry name" value="TF_T-box"/>
</dbReference>
<dbReference type="InterPro" id="IPR018186">
    <property type="entry name" value="TF_T-box_CS"/>
</dbReference>
<dbReference type="PANTHER" id="PTHR11267:SF170">
    <property type="entry name" value="T-BOX PROTEIN 33-RELATED"/>
    <property type="match status" value="1"/>
</dbReference>
<dbReference type="PANTHER" id="PTHR11267">
    <property type="entry name" value="T-BOX PROTEIN-RELATED"/>
    <property type="match status" value="1"/>
</dbReference>
<dbReference type="Pfam" id="PF00907">
    <property type="entry name" value="T-box"/>
    <property type="match status" value="1"/>
</dbReference>
<dbReference type="PRINTS" id="PR00937">
    <property type="entry name" value="TBOX"/>
</dbReference>
<dbReference type="SMART" id="SM00425">
    <property type="entry name" value="TBOX"/>
    <property type="match status" value="1"/>
</dbReference>
<dbReference type="SUPFAM" id="SSF49417">
    <property type="entry name" value="p53-like transcription factors"/>
    <property type="match status" value="1"/>
</dbReference>
<dbReference type="PROSITE" id="PS01283">
    <property type="entry name" value="TBOX_1"/>
    <property type="match status" value="1"/>
</dbReference>
<dbReference type="PROSITE" id="PS01264">
    <property type="entry name" value="TBOX_2"/>
    <property type="match status" value="1"/>
</dbReference>
<dbReference type="PROSITE" id="PS50252">
    <property type="entry name" value="TBOX_3"/>
    <property type="match status" value="1"/>
</dbReference>
<proteinExistence type="evidence at transcript level"/>
<feature type="chain" id="PRO_0000184472" description="T-box transcription factor tbx-9">
    <location>
        <begin position="1"/>
        <end position="292"/>
    </location>
</feature>
<feature type="DNA-binding region" description="T-box" evidence="2">
    <location>
        <begin position="10"/>
        <end position="194"/>
    </location>
</feature>
<feature type="region of interest" description="Disordered" evidence="4">
    <location>
        <begin position="192"/>
        <end position="227"/>
    </location>
</feature>
<feature type="region of interest" description="Disordered" evidence="4">
    <location>
        <begin position="265"/>
        <end position="292"/>
    </location>
</feature>
<feature type="compositionally biased region" description="Low complexity" evidence="4">
    <location>
        <begin position="204"/>
        <end position="223"/>
    </location>
</feature>
<feature type="compositionally biased region" description="Low complexity" evidence="4">
    <location>
        <begin position="265"/>
        <end position="275"/>
    </location>
</feature>
<feature type="compositionally biased region" description="Acidic residues" evidence="4">
    <location>
        <begin position="280"/>
        <end position="292"/>
    </location>
</feature>